<proteinExistence type="inferred from homology"/>
<sequence>MSITKDQIIEAVSAMSVMDVVELISAMEEKFGVSAAAAVAVAAGPAEAAEEKTEFDVILKAAGANKVAVIKAVRGATGLGLKEAKDLVESAPAALKEGVSKDDAEALKKSLEEAGAEVEVK</sequence>
<name>RL7_SALA4</name>
<dbReference type="EMBL" id="CP001138">
    <property type="protein sequence ID" value="ACH49322.1"/>
    <property type="molecule type" value="Genomic_DNA"/>
</dbReference>
<dbReference type="RefSeq" id="WP_000028882.1">
    <property type="nucleotide sequence ID" value="NC_011149.1"/>
</dbReference>
<dbReference type="SMR" id="B5F0W6"/>
<dbReference type="GeneID" id="89551069"/>
<dbReference type="KEGG" id="sea:SeAg_B4394"/>
<dbReference type="HOGENOM" id="CLU_086499_3_2_6"/>
<dbReference type="Proteomes" id="UP000008819">
    <property type="component" value="Chromosome"/>
</dbReference>
<dbReference type="GO" id="GO:0022625">
    <property type="term" value="C:cytosolic large ribosomal subunit"/>
    <property type="evidence" value="ECO:0007669"/>
    <property type="project" value="TreeGrafter"/>
</dbReference>
<dbReference type="GO" id="GO:0003729">
    <property type="term" value="F:mRNA binding"/>
    <property type="evidence" value="ECO:0007669"/>
    <property type="project" value="TreeGrafter"/>
</dbReference>
<dbReference type="GO" id="GO:0003735">
    <property type="term" value="F:structural constituent of ribosome"/>
    <property type="evidence" value="ECO:0007669"/>
    <property type="project" value="InterPro"/>
</dbReference>
<dbReference type="GO" id="GO:0006412">
    <property type="term" value="P:translation"/>
    <property type="evidence" value="ECO:0007669"/>
    <property type="project" value="UniProtKB-UniRule"/>
</dbReference>
<dbReference type="CDD" id="cd00387">
    <property type="entry name" value="Ribosomal_L7_L12"/>
    <property type="match status" value="1"/>
</dbReference>
<dbReference type="FunFam" id="1.20.5.710:FF:000001">
    <property type="entry name" value="50S ribosomal protein L7/L12"/>
    <property type="match status" value="1"/>
</dbReference>
<dbReference type="FunFam" id="3.30.1390.10:FF:000001">
    <property type="entry name" value="50S ribosomal protein L7/L12"/>
    <property type="match status" value="1"/>
</dbReference>
<dbReference type="Gene3D" id="3.30.1390.10">
    <property type="match status" value="1"/>
</dbReference>
<dbReference type="Gene3D" id="1.20.5.710">
    <property type="entry name" value="Single helix bin"/>
    <property type="match status" value="1"/>
</dbReference>
<dbReference type="HAMAP" id="MF_00368">
    <property type="entry name" value="Ribosomal_bL12"/>
    <property type="match status" value="1"/>
</dbReference>
<dbReference type="InterPro" id="IPR000206">
    <property type="entry name" value="Ribosomal_bL12"/>
</dbReference>
<dbReference type="InterPro" id="IPR013823">
    <property type="entry name" value="Ribosomal_bL12_C"/>
</dbReference>
<dbReference type="InterPro" id="IPR014719">
    <property type="entry name" value="Ribosomal_bL12_C/ClpS-like"/>
</dbReference>
<dbReference type="InterPro" id="IPR008932">
    <property type="entry name" value="Ribosomal_bL12_oligo"/>
</dbReference>
<dbReference type="InterPro" id="IPR036235">
    <property type="entry name" value="Ribosomal_bL12_oligo_N_sf"/>
</dbReference>
<dbReference type="NCBIfam" id="TIGR00855">
    <property type="entry name" value="L12"/>
    <property type="match status" value="1"/>
</dbReference>
<dbReference type="PANTHER" id="PTHR45987">
    <property type="entry name" value="39S RIBOSOMAL PROTEIN L12"/>
    <property type="match status" value="1"/>
</dbReference>
<dbReference type="PANTHER" id="PTHR45987:SF4">
    <property type="entry name" value="LARGE RIBOSOMAL SUBUNIT PROTEIN BL12M"/>
    <property type="match status" value="1"/>
</dbReference>
<dbReference type="Pfam" id="PF00542">
    <property type="entry name" value="Ribosomal_L12"/>
    <property type="match status" value="1"/>
</dbReference>
<dbReference type="Pfam" id="PF16320">
    <property type="entry name" value="Ribosomal_L12_N"/>
    <property type="match status" value="1"/>
</dbReference>
<dbReference type="SUPFAM" id="SSF54736">
    <property type="entry name" value="ClpS-like"/>
    <property type="match status" value="1"/>
</dbReference>
<dbReference type="SUPFAM" id="SSF48300">
    <property type="entry name" value="Ribosomal protein L7/12, oligomerisation (N-terminal) domain"/>
    <property type="match status" value="1"/>
</dbReference>
<keyword id="KW-0687">Ribonucleoprotein</keyword>
<keyword id="KW-0689">Ribosomal protein</keyword>
<gene>
    <name evidence="1" type="primary">rplL</name>
    <name type="ordered locus">SeAg_B4394</name>
</gene>
<feature type="chain" id="PRO_1000121481" description="Large ribosomal subunit protein bL12">
    <location>
        <begin position="1"/>
        <end position="121"/>
    </location>
</feature>
<evidence type="ECO:0000255" key="1">
    <source>
        <dbReference type="HAMAP-Rule" id="MF_00368"/>
    </source>
</evidence>
<evidence type="ECO:0000305" key="2"/>
<organism>
    <name type="scientific">Salmonella agona (strain SL483)</name>
    <dbReference type="NCBI Taxonomy" id="454166"/>
    <lineage>
        <taxon>Bacteria</taxon>
        <taxon>Pseudomonadati</taxon>
        <taxon>Pseudomonadota</taxon>
        <taxon>Gammaproteobacteria</taxon>
        <taxon>Enterobacterales</taxon>
        <taxon>Enterobacteriaceae</taxon>
        <taxon>Salmonella</taxon>
    </lineage>
</organism>
<reference key="1">
    <citation type="journal article" date="2011" name="J. Bacteriol.">
        <title>Comparative genomics of 28 Salmonella enterica isolates: evidence for CRISPR-mediated adaptive sublineage evolution.</title>
        <authorList>
            <person name="Fricke W.F."/>
            <person name="Mammel M.K."/>
            <person name="McDermott P.F."/>
            <person name="Tartera C."/>
            <person name="White D.G."/>
            <person name="Leclerc J.E."/>
            <person name="Ravel J."/>
            <person name="Cebula T.A."/>
        </authorList>
    </citation>
    <scope>NUCLEOTIDE SEQUENCE [LARGE SCALE GENOMIC DNA]</scope>
    <source>
        <strain>SL483</strain>
    </source>
</reference>
<comment type="function">
    <text evidence="1">Forms part of the ribosomal stalk which helps the ribosome interact with GTP-bound translation factors. Is thus essential for accurate translation.</text>
</comment>
<comment type="subunit">
    <text evidence="1">Homodimer. Part of the ribosomal stalk of the 50S ribosomal subunit. Forms a multimeric L10(L12)X complex, where L10 forms an elongated spine to which 2 to 4 L12 dimers bind in a sequential fashion. Binds GTP-bound translation factors.</text>
</comment>
<comment type="similarity">
    <text evidence="1">Belongs to the bacterial ribosomal protein bL12 family.</text>
</comment>
<protein>
    <recommendedName>
        <fullName evidence="1">Large ribosomal subunit protein bL12</fullName>
    </recommendedName>
    <alternativeName>
        <fullName evidence="2">50S ribosomal protein L7/L12</fullName>
    </alternativeName>
</protein>
<accession>B5F0W6</accession>